<name>LCP3_DROME</name>
<feature type="signal peptide">
    <location>
        <begin position="1"/>
        <end position="16"/>
    </location>
</feature>
<feature type="chain" id="PRO_0000006391" description="Larval cuticle protein 3">
    <location>
        <begin position="17"/>
        <end position="112"/>
    </location>
</feature>
<feature type="domain" description="Chitin-binding type R&amp;R" evidence="1">
    <location>
        <begin position="31"/>
        <end position="92"/>
    </location>
</feature>
<comment type="function">
    <text>Component of the larval cuticle.</text>
</comment>
<proteinExistence type="evidence at protein level"/>
<reference key="1">
    <citation type="journal article" date="1982" name="Cell">
        <title>Cuticle protein genes of Drosophila: structure, organization and evolution of four clustered genes.</title>
        <authorList>
            <person name="Snyder M."/>
            <person name="Hunkapiller M."/>
            <person name="Yuen D."/>
            <person name="Silvert D."/>
            <person name="Fristrom J."/>
            <person name="Davidson N."/>
        </authorList>
    </citation>
    <scope>NUCLEOTIDE SEQUENCE [GENOMIC DNA]</scope>
    <scope>PARTIAL PROTEIN SEQUENCE</scope>
    <source>
        <strain>Canton-S</strain>
        <strain>Oregon-R</strain>
        <tissue>Larva</tissue>
    </source>
</reference>
<reference key="2">
    <citation type="journal article" date="2000" name="Science">
        <title>The genome sequence of Drosophila melanogaster.</title>
        <authorList>
            <person name="Adams M.D."/>
            <person name="Celniker S.E."/>
            <person name="Holt R.A."/>
            <person name="Evans C.A."/>
            <person name="Gocayne J.D."/>
            <person name="Amanatides P.G."/>
            <person name="Scherer S.E."/>
            <person name="Li P.W."/>
            <person name="Hoskins R.A."/>
            <person name="Galle R.F."/>
            <person name="George R.A."/>
            <person name="Lewis S.E."/>
            <person name="Richards S."/>
            <person name="Ashburner M."/>
            <person name="Henderson S.N."/>
            <person name="Sutton G.G."/>
            <person name="Wortman J.R."/>
            <person name="Yandell M.D."/>
            <person name="Zhang Q."/>
            <person name="Chen L.X."/>
            <person name="Brandon R.C."/>
            <person name="Rogers Y.-H.C."/>
            <person name="Blazej R.G."/>
            <person name="Champe M."/>
            <person name="Pfeiffer B.D."/>
            <person name="Wan K.H."/>
            <person name="Doyle C."/>
            <person name="Baxter E.G."/>
            <person name="Helt G."/>
            <person name="Nelson C.R."/>
            <person name="Miklos G.L.G."/>
            <person name="Abril J.F."/>
            <person name="Agbayani A."/>
            <person name="An H.-J."/>
            <person name="Andrews-Pfannkoch C."/>
            <person name="Baldwin D."/>
            <person name="Ballew R.M."/>
            <person name="Basu A."/>
            <person name="Baxendale J."/>
            <person name="Bayraktaroglu L."/>
            <person name="Beasley E.M."/>
            <person name="Beeson K.Y."/>
            <person name="Benos P.V."/>
            <person name="Berman B.P."/>
            <person name="Bhandari D."/>
            <person name="Bolshakov S."/>
            <person name="Borkova D."/>
            <person name="Botchan M.R."/>
            <person name="Bouck J."/>
            <person name="Brokstein P."/>
            <person name="Brottier P."/>
            <person name="Burtis K.C."/>
            <person name="Busam D.A."/>
            <person name="Butler H."/>
            <person name="Cadieu E."/>
            <person name="Center A."/>
            <person name="Chandra I."/>
            <person name="Cherry J.M."/>
            <person name="Cawley S."/>
            <person name="Dahlke C."/>
            <person name="Davenport L.B."/>
            <person name="Davies P."/>
            <person name="de Pablos B."/>
            <person name="Delcher A."/>
            <person name="Deng Z."/>
            <person name="Mays A.D."/>
            <person name="Dew I."/>
            <person name="Dietz S.M."/>
            <person name="Dodson K."/>
            <person name="Doup L.E."/>
            <person name="Downes M."/>
            <person name="Dugan-Rocha S."/>
            <person name="Dunkov B.C."/>
            <person name="Dunn P."/>
            <person name="Durbin K.J."/>
            <person name="Evangelista C.C."/>
            <person name="Ferraz C."/>
            <person name="Ferriera S."/>
            <person name="Fleischmann W."/>
            <person name="Fosler C."/>
            <person name="Gabrielian A.E."/>
            <person name="Garg N.S."/>
            <person name="Gelbart W.M."/>
            <person name="Glasser K."/>
            <person name="Glodek A."/>
            <person name="Gong F."/>
            <person name="Gorrell J.H."/>
            <person name="Gu Z."/>
            <person name="Guan P."/>
            <person name="Harris M."/>
            <person name="Harris N.L."/>
            <person name="Harvey D.A."/>
            <person name="Heiman T.J."/>
            <person name="Hernandez J.R."/>
            <person name="Houck J."/>
            <person name="Hostin D."/>
            <person name="Houston K.A."/>
            <person name="Howland T.J."/>
            <person name="Wei M.-H."/>
            <person name="Ibegwam C."/>
            <person name="Jalali M."/>
            <person name="Kalush F."/>
            <person name="Karpen G.H."/>
            <person name="Ke Z."/>
            <person name="Kennison J.A."/>
            <person name="Ketchum K.A."/>
            <person name="Kimmel B.E."/>
            <person name="Kodira C.D."/>
            <person name="Kraft C.L."/>
            <person name="Kravitz S."/>
            <person name="Kulp D."/>
            <person name="Lai Z."/>
            <person name="Lasko P."/>
            <person name="Lei Y."/>
            <person name="Levitsky A.A."/>
            <person name="Li J.H."/>
            <person name="Li Z."/>
            <person name="Liang Y."/>
            <person name="Lin X."/>
            <person name="Liu X."/>
            <person name="Mattei B."/>
            <person name="McIntosh T.C."/>
            <person name="McLeod M.P."/>
            <person name="McPherson D."/>
            <person name="Merkulov G."/>
            <person name="Milshina N.V."/>
            <person name="Mobarry C."/>
            <person name="Morris J."/>
            <person name="Moshrefi A."/>
            <person name="Mount S.M."/>
            <person name="Moy M."/>
            <person name="Murphy B."/>
            <person name="Murphy L."/>
            <person name="Muzny D.M."/>
            <person name="Nelson D.L."/>
            <person name="Nelson D.R."/>
            <person name="Nelson K.A."/>
            <person name="Nixon K."/>
            <person name="Nusskern D.R."/>
            <person name="Pacleb J.M."/>
            <person name="Palazzolo M."/>
            <person name="Pittman G.S."/>
            <person name="Pan S."/>
            <person name="Pollard J."/>
            <person name="Puri V."/>
            <person name="Reese M.G."/>
            <person name="Reinert K."/>
            <person name="Remington K."/>
            <person name="Saunders R.D.C."/>
            <person name="Scheeler F."/>
            <person name="Shen H."/>
            <person name="Shue B.C."/>
            <person name="Siden-Kiamos I."/>
            <person name="Simpson M."/>
            <person name="Skupski M.P."/>
            <person name="Smith T.J."/>
            <person name="Spier E."/>
            <person name="Spradling A.C."/>
            <person name="Stapleton M."/>
            <person name="Strong R."/>
            <person name="Sun E."/>
            <person name="Svirskas R."/>
            <person name="Tector C."/>
            <person name="Turner R."/>
            <person name="Venter E."/>
            <person name="Wang A.H."/>
            <person name="Wang X."/>
            <person name="Wang Z.-Y."/>
            <person name="Wassarman D.A."/>
            <person name="Weinstock G.M."/>
            <person name="Weissenbach J."/>
            <person name="Williams S.M."/>
            <person name="Woodage T."/>
            <person name="Worley K.C."/>
            <person name="Wu D."/>
            <person name="Yang S."/>
            <person name="Yao Q.A."/>
            <person name="Ye J."/>
            <person name="Yeh R.-F."/>
            <person name="Zaveri J.S."/>
            <person name="Zhan M."/>
            <person name="Zhang G."/>
            <person name="Zhao Q."/>
            <person name="Zheng L."/>
            <person name="Zheng X.H."/>
            <person name="Zhong F.N."/>
            <person name="Zhong W."/>
            <person name="Zhou X."/>
            <person name="Zhu S.C."/>
            <person name="Zhu X."/>
            <person name="Smith H.O."/>
            <person name="Gibbs R.A."/>
            <person name="Myers E.W."/>
            <person name="Rubin G.M."/>
            <person name="Venter J.C."/>
        </authorList>
    </citation>
    <scope>NUCLEOTIDE SEQUENCE [LARGE SCALE GENOMIC DNA]</scope>
    <source>
        <strain>Berkeley</strain>
    </source>
</reference>
<reference key="3">
    <citation type="journal article" date="2002" name="Genome Biol.">
        <title>Annotation of the Drosophila melanogaster euchromatic genome: a systematic review.</title>
        <authorList>
            <person name="Misra S."/>
            <person name="Crosby M.A."/>
            <person name="Mungall C.J."/>
            <person name="Matthews B.B."/>
            <person name="Campbell K.S."/>
            <person name="Hradecky P."/>
            <person name="Huang Y."/>
            <person name="Kaminker J.S."/>
            <person name="Millburn G.H."/>
            <person name="Prochnik S.E."/>
            <person name="Smith C.D."/>
            <person name="Tupy J.L."/>
            <person name="Whitfield E.J."/>
            <person name="Bayraktaroglu L."/>
            <person name="Berman B.P."/>
            <person name="Bettencourt B.R."/>
            <person name="Celniker S.E."/>
            <person name="de Grey A.D.N.J."/>
            <person name="Drysdale R.A."/>
            <person name="Harris N.L."/>
            <person name="Richter J."/>
            <person name="Russo S."/>
            <person name="Schroeder A.J."/>
            <person name="Shu S.Q."/>
            <person name="Stapleton M."/>
            <person name="Yamada C."/>
            <person name="Ashburner M."/>
            <person name="Gelbart W.M."/>
            <person name="Rubin G.M."/>
            <person name="Lewis S.E."/>
        </authorList>
    </citation>
    <scope>GENOME REANNOTATION</scope>
    <source>
        <strain>Berkeley</strain>
    </source>
</reference>
<reference key="4">
    <citation type="submission" date="2004-02" db="EMBL/GenBank/DDBJ databases">
        <authorList>
            <person name="Stapleton M."/>
            <person name="Carlson J.W."/>
            <person name="Chavez C."/>
            <person name="Frise E."/>
            <person name="George R.A."/>
            <person name="Pacleb J.M."/>
            <person name="Park S."/>
            <person name="Wan K.H."/>
            <person name="Yu C."/>
            <person name="Rubin G.M."/>
            <person name="Celniker S.E."/>
        </authorList>
    </citation>
    <scope>NUCLEOTIDE SEQUENCE [LARGE SCALE MRNA]</scope>
    <source>
        <strain>Berkeley</strain>
        <tissue>Larva</tissue>
        <tissue>Pupae</tissue>
    </source>
</reference>
<organism>
    <name type="scientific">Drosophila melanogaster</name>
    <name type="common">Fruit fly</name>
    <dbReference type="NCBI Taxonomy" id="7227"/>
    <lineage>
        <taxon>Eukaryota</taxon>
        <taxon>Metazoa</taxon>
        <taxon>Ecdysozoa</taxon>
        <taxon>Arthropoda</taxon>
        <taxon>Hexapoda</taxon>
        <taxon>Insecta</taxon>
        <taxon>Pterygota</taxon>
        <taxon>Neoptera</taxon>
        <taxon>Endopterygota</taxon>
        <taxon>Diptera</taxon>
        <taxon>Brachycera</taxon>
        <taxon>Muscomorpha</taxon>
        <taxon>Ephydroidea</taxon>
        <taxon>Drosophilidae</taxon>
        <taxon>Drosophila</taxon>
        <taxon>Sophophora</taxon>
    </lineage>
</organism>
<accession>P07188</accession>
<accession>Q53XF1</accession>
<accession>Q9V4T1</accession>
<gene>
    <name type="primary">Lcp3</name>
    <name type="ORF">CG2043</name>
</gene>
<keyword id="KW-0193">Cuticle</keyword>
<keyword id="KW-0903">Direct protein sequencing</keyword>
<keyword id="KW-1185">Reference proteome</keyword>
<keyword id="KW-0732">Signal</keyword>
<protein>
    <recommendedName>
        <fullName>Larval cuticle protein 3</fullName>
    </recommendedName>
    <alternativeName>
        <fullName>Larval cuticle protein III</fullName>
    </alternativeName>
</protein>
<evidence type="ECO:0000255" key="1">
    <source>
        <dbReference type="PROSITE-ProRule" id="PRU00497"/>
    </source>
</evidence>
<sequence>MFKILLVCSLAALVAANANVEVKELVNDVQPDGFVSKLVLDDGSASSATGDIHGNIDGVFEWISPEGVHVRVSYKADENGYQPQSDLLPTPPPIPAAILKAIAYIEANPSKN</sequence>
<dbReference type="EMBL" id="V00203">
    <property type="protein sequence ID" value="CAA23489.1"/>
    <property type="molecule type" value="Genomic_DNA"/>
</dbReference>
<dbReference type="EMBL" id="AE013599">
    <property type="protein sequence ID" value="AAF59094.1"/>
    <property type="molecule type" value="Genomic_DNA"/>
</dbReference>
<dbReference type="EMBL" id="BT011538">
    <property type="protein sequence ID" value="AAS15674.1"/>
    <property type="molecule type" value="mRNA"/>
</dbReference>
<dbReference type="PIR" id="C25299">
    <property type="entry name" value="C25299"/>
</dbReference>
<dbReference type="RefSeq" id="NP_001260803.1">
    <property type="nucleotide sequence ID" value="NM_001273874.1"/>
</dbReference>
<dbReference type="RefSeq" id="NP_476621.1">
    <property type="nucleotide sequence ID" value="NM_057273.4"/>
</dbReference>
<dbReference type="BioGRID" id="61672">
    <property type="interactions" value="2"/>
</dbReference>
<dbReference type="DIP" id="DIP-22311N"/>
<dbReference type="FunCoup" id="P07188">
    <property type="interactions" value="18"/>
</dbReference>
<dbReference type="IntAct" id="P07188">
    <property type="interactions" value="1"/>
</dbReference>
<dbReference type="STRING" id="7227.FBpp0305732"/>
<dbReference type="PaxDb" id="7227-FBpp0305732"/>
<dbReference type="DNASU" id="35819"/>
<dbReference type="EnsemblMetazoa" id="FBtr0088743">
    <property type="protein sequence ID" value="FBpp0087822"/>
    <property type="gene ID" value="FBgn0002534"/>
</dbReference>
<dbReference type="EnsemblMetazoa" id="FBtr0333554">
    <property type="protein sequence ID" value="FBpp0305732"/>
    <property type="gene ID" value="FBgn0002534"/>
</dbReference>
<dbReference type="GeneID" id="35819"/>
<dbReference type="KEGG" id="dme:Dmel_CG2043"/>
<dbReference type="AGR" id="FB:FBgn0002534"/>
<dbReference type="CTD" id="35819"/>
<dbReference type="FlyBase" id="FBgn0002534">
    <property type="gene designation" value="Lcp3"/>
</dbReference>
<dbReference type="VEuPathDB" id="VectorBase:FBgn0002534"/>
<dbReference type="eggNOG" id="ENOG502TD3C">
    <property type="taxonomic scope" value="Eukaryota"/>
</dbReference>
<dbReference type="GeneTree" id="ENSGT00900000141325"/>
<dbReference type="HOGENOM" id="CLU_065450_3_1_1"/>
<dbReference type="InParanoid" id="P07188"/>
<dbReference type="OMA" id="RVNYKAD"/>
<dbReference type="OrthoDB" id="7363665at2759"/>
<dbReference type="PhylomeDB" id="P07188"/>
<dbReference type="BioGRID-ORCS" id="35819">
    <property type="hits" value="0 hits in 1 CRISPR screen"/>
</dbReference>
<dbReference type="GenomeRNAi" id="35819"/>
<dbReference type="PRO" id="PR:P07188"/>
<dbReference type="Proteomes" id="UP000000803">
    <property type="component" value="Chromosome 2R"/>
</dbReference>
<dbReference type="Bgee" id="FBgn0002534">
    <property type="expression patterns" value="Expressed in larva and 5 other cell types or tissues"/>
</dbReference>
<dbReference type="ExpressionAtlas" id="P07188">
    <property type="expression patterns" value="baseline and differential"/>
</dbReference>
<dbReference type="GO" id="GO:0062129">
    <property type="term" value="C:chitin-based extracellular matrix"/>
    <property type="evidence" value="ECO:0000314"/>
    <property type="project" value="FlyBase"/>
</dbReference>
<dbReference type="GO" id="GO:0008010">
    <property type="term" value="F:structural constituent of chitin-based larval cuticle"/>
    <property type="evidence" value="ECO:0000314"/>
    <property type="project" value="FlyBase"/>
</dbReference>
<dbReference type="GO" id="GO:0040003">
    <property type="term" value="P:chitin-based cuticle development"/>
    <property type="evidence" value="ECO:0000255"/>
    <property type="project" value="FlyBase"/>
</dbReference>
<dbReference type="GO" id="GO:0008363">
    <property type="term" value="P:larval chitin-based cuticle development"/>
    <property type="evidence" value="ECO:0000305"/>
    <property type="project" value="FlyBase"/>
</dbReference>
<dbReference type="InterPro" id="IPR031311">
    <property type="entry name" value="CHIT_BIND_RR_consensus"/>
</dbReference>
<dbReference type="InterPro" id="IPR050468">
    <property type="entry name" value="Cuticle_Struct_Prot"/>
</dbReference>
<dbReference type="InterPro" id="IPR000618">
    <property type="entry name" value="Insect_cuticle"/>
</dbReference>
<dbReference type="PANTHER" id="PTHR10380">
    <property type="entry name" value="CUTICLE PROTEIN"/>
    <property type="match status" value="1"/>
</dbReference>
<dbReference type="PANTHER" id="PTHR10380:SF237">
    <property type="entry name" value="CUTICULAR PROTEIN 65AU, ISOFORM A-RELATED"/>
    <property type="match status" value="1"/>
</dbReference>
<dbReference type="Pfam" id="PF00379">
    <property type="entry name" value="Chitin_bind_4"/>
    <property type="match status" value="1"/>
</dbReference>
<dbReference type="PROSITE" id="PS00233">
    <property type="entry name" value="CHIT_BIND_RR_1"/>
    <property type="match status" value="1"/>
</dbReference>
<dbReference type="PROSITE" id="PS51155">
    <property type="entry name" value="CHIT_BIND_RR_2"/>
    <property type="match status" value="1"/>
</dbReference>